<evidence type="ECO:0000255" key="1">
    <source>
        <dbReference type="HAMAP-Rule" id="MF_00528"/>
    </source>
</evidence>
<gene>
    <name type="ordered locus">cbdbA1046</name>
</gene>
<sequence length="224" mass="24372">MPDNPTGTLPEIILASASPRRRQILSEMGFVFSVCPSQAELYPDGSVAPAEFAVLNAQIKAKDIASKYSNGLIIAADTIVVDDFGILGKPSSKKVALNYLSRLGGKPHTVISSVCLLNAENGQIRSATCQSTLTMRPYTQAEAQRYVDSGLPMDKAGAYGIQDKEFNPAENIQGCYLNVVGLPACTLVRLINEMGFNPKLARNWKPEGDCTLCRIYRTEISRLR</sequence>
<feature type="chain" id="PRO_0000267296" description="dTTP/UTP pyrophosphatase">
    <location>
        <begin position="1"/>
        <end position="224"/>
    </location>
</feature>
<feature type="active site" description="Proton acceptor" evidence="1">
    <location>
        <position position="77"/>
    </location>
</feature>
<feature type="site" description="Important for substrate specificity" evidence="1">
    <location>
        <position position="20"/>
    </location>
</feature>
<feature type="site" description="Important for substrate specificity" evidence="1">
    <location>
        <position position="78"/>
    </location>
</feature>
<feature type="site" description="Important for substrate specificity" evidence="1">
    <location>
        <position position="162"/>
    </location>
</feature>
<name>NTPPA_DEHMC</name>
<dbReference type="EC" id="3.6.1.9" evidence="1"/>
<dbReference type="EMBL" id="AJ965256">
    <property type="protein sequence ID" value="CAI83152.1"/>
    <property type="molecule type" value="Genomic_DNA"/>
</dbReference>
<dbReference type="RefSeq" id="WP_011309503.1">
    <property type="nucleotide sequence ID" value="NC_007356.1"/>
</dbReference>
<dbReference type="SMR" id="Q3ZY38"/>
<dbReference type="KEGG" id="deh:cbdbA1046"/>
<dbReference type="HOGENOM" id="CLU_040416_0_0_0"/>
<dbReference type="Proteomes" id="UP000000433">
    <property type="component" value="Chromosome"/>
</dbReference>
<dbReference type="GO" id="GO:0005737">
    <property type="term" value="C:cytoplasm"/>
    <property type="evidence" value="ECO:0007669"/>
    <property type="project" value="UniProtKB-SubCell"/>
</dbReference>
<dbReference type="GO" id="GO:0036218">
    <property type="term" value="F:dTTP diphosphatase activity"/>
    <property type="evidence" value="ECO:0007669"/>
    <property type="project" value="RHEA"/>
</dbReference>
<dbReference type="GO" id="GO:0036221">
    <property type="term" value="F:UTP diphosphatase activity"/>
    <property type="evidence" value="ECO:0007669"/>
    <property type="project" value="RHEA"/>
</dbReference>
<dbReference type="GO" id="GO:0009117">
    <property type="term" value="P:nucleotide metabolic process"/>
    <property type="evidence" value="ECO:0007669"/>
    <property type="project" value="UniProtKB-KW"/>
</dbReference>
<dbReference type="CDD" id="cd00555">
    <property type="entry name" value="Maf"/>
    <property type="match status" value="1"/>
</dbReference>
<dbReference type="Gene3D" id="3.90.950.10">
    <property type="match status" value="1"/>
</dbReference>
<dbReference type="HAMAP" id="MF_00528">
    <property type="entry name" value="Maf"/>
    <property type="match status" value="1"/>
</dbReference>
<dbReference type="InterPro" id="IPR029001">
    <property type="entry name" value="ITPase-like_fam"/>
</dbReference>
<dbReference type="InterPro" id="IPR003697">
    <property type="entry name" value="Maf-like"/>
</dbReference>
<dbReference type="NCBIfam" id="TIGR00172">
    <property type="entry name" value="maf"/>
    <property type="match status" value="1"/>
</dbReference>
<dbReference type="PANTHER" id="PTHR43213">
    <property type="entry name" value="BIFUNCTIONAL DTTP/UTP PYROPHOSPHATASE/METHYLTRANSFERASE PROTEIN-RELATED"/>
    <property type="match status" value="1"/>
</dbReference>
<dbReference type="PANTHER" id="PTHR43213:SF5">
    <property type="entry name" value="BIFUNCTIONAL DTTP_UTP PYROPHOSPHATASE_METHYLTRANSFERASE PROTEIN-RELATED"/>
    <property type="match status" value="1"/>
</dbReference>
<dbReference type="Pfam" id="PF02545">
    <property type="entry name" value="Maf"/>
    <property type="match status" value="1"/>
</dbReference>
<dbReference type="PIRSF" id="PIRSF006305">
    <property type="entry name" value="Maf"/>
    <property type="match status" value="1"/>
</dbReference>
<dbReference type="SUPFAM" id="SSF52972">
    <property type="entry name" value="ITPase-like"/>
    <property type="match status" value="1"/>
</dbReference>
<protein>
    <recommendedName>
        <fullName evidence="1">dTTP/UTP pyrophosphatase</fullName>
        <shortName evidence="1">dTTPase/UTPase</shortName>
        <ecNumber evidence="1">3.6.1.9</ecNumber>
    </recommendedName>
    <alternativeName>
        <fullName evidence="1">Nucleoside triphosphate pyrophosphatase</fullName>
    </alternativeName>
    <alternativeName>
        <fullName evidence="1">Nucleotide pyrophosphatase</fullName>
        <shortName evidence="1">Nucleotide PPase</shortName>
    </alternativeName>
</protein>
<proteinExistence type="inferred from homology"/>
<reference key="1">
    <citation type="journal article" date="2005" name="Nat. Biotechnol.">
        <title>Genome sequence of the chlorinated compound-respiring bacterium Dehalococcoides species strain CBDB1.</title>
        <authorList>
            <person name="Kube M."/>
            <person name="Beck A."/>
            <person name="Zinder S.H."/>
            <person name="Kuhl H."/>
            <person name="Reinhardt R."/>
            <person name="Adrian L."/>
        </authorList>
    </citation>
    <scope>NUCLEOTIDE SEQUENCE [LARGE SCALE GENOMIC DNA]</scope>
    <source>
        <strain>CBDB1</strain>
    </source>
</reference>
<organism>
    <name type="scientific">Dehalococcoides mccartyi (strain CBDB1)</name>
    <dbReference type="NCBI Taxonomy" id="255470"/>
    <lineage>
        <taxon>Bacteria</taxon>
        <taxon>Bacillati</taxon>
        <taxon>Chloroflexota</taxon>
        <taxon>Dehalococcoidia</taxon>
        <taxon>Dehalococcoidales</taxon>
        <taxon>Dehalococcoidaceae</taxon>
        <taxon>Dehalococcoides</taxon>
    </lineage>
</organism>
<comment type="function">
    <text evidence="1">Nucleoside triphosphate pyrophosphatase that hydrolyzes dTTP and UTP. May have a dual role in cell division arrest and in preventing the incorporation of modified nucleotides into cellular nucleic acids.</text>
</comment>
<comment type="catalytic activity">
    <reaction evidence="1">
        <text>dTTP + H2O = dTMP + diphosphate + H(+)</text>
        <dbReference type="Rhea" id="RHEA:28534"/>
        <dbReference type="ChEBI" id="CHEBI:15377"/>
        <dbReference type="ChEBI" id="CHEBI:15378"/>
        <dbReference type="ChEBI" id="CHEBI:33019"/>
        <dbReference type="ChEBI" id="CHEBI:37568"/>
        <dbReference type="ChEBI" id="CHEBI:63528"/>
        <dbReference type="EC" id="3.6.1.9"/>
    </reaction>
</comment>
<comment type="catalytic activity">
    <reaction evidence="1">
        <text>UTP + H2O = UMP + diphosphate + H(+)</text>
        <dbReference type="Rhea" id="RHEA:29395"/>
        <dbReference type="ChEBI" id="CHEBI:15377"/>
        <dbReference type="ChEBI" id="CHEBI:15378"/>
        <dbReference type="ChEBI" id="CHEBI:33019"/>
        <dbReference type="ChEBI" id="CHEBI:46398"/>
        <dbReference type="ChEBI" id="CHEBI:57865"/>
        <dbReference type="EC" id="3.6.1.9"/>
    </reaction>
</comment>
<comment type="cofactor">
    <cofactor evidence="1">
        <name>a divalent metal cation</name>
        <dbReference type="ChEBI" id="CHEBI:60240"/>
    </cofactor>
</comment>
<comment type="subcellular location">
    <subcellularLocation>
        <location evidence="1">Cytoplasm</location>
    </subcellularLocation>
</comment>
<comment type="similarity">
    <text evidence="1">Belongs to the Maf family. YhdE subfamily.</text>
</comment>
<accession>Q3ZY38</accession>
<keyword id="KW-0963">Cytoplasm</keyword>
<keyword id="KW-0378">Hydrolase</keyword>
<keyword id="KW-0546">Nucleotide metabolism</keyword>